<evidence type="ECO:0000250" key="1">
    <source>
        <dbReference type="UniProtKB" id="Q2TB18"/>
    </source>
</evidence>
<evidence type="ECO:0000269" key="2">
    <source>
    </source>
</evidence>
<evidence type="ECO:0000303" key="3">
    <source>
    </source>
</evidence>
<evidence type="ECO:0000305" key="4"/>
<comment type="function">
    <text evidence="1 2">Structure-specific DNA endonuclease that specifically cleaves single-stranded DNA and 3' overhang DNA (By similarity). Contributes to the control of DNA double-strand break repair choice by antagonizing BRCA1-dependent homologous recombination (HR) and promoting non-homologous end-joining (NHEJ) (PubMed:34354233). Recruited to the single-stranded DNA ends by SHLD2 and cleaves the 3' exposed DNA ends, therefore inhibiting DNA end resection (necessary for HR) and promoting DNA end protection (necessary for NHEJ) (By similarity).</text>
</comment>
<comment type="subunit">
    <text evidence="1">Interacts with SHLD1, SHLD2, SHLD3, RIF1 and MAD2L2/REV7.</text>
</comment>
<comment type="alternative products">
    <event type="alternative splicing"/>
    <isoform>
        <id>Q8BIR2-1</id>
        <name>1</name>
        <sequence type="displayed"/>
    </isoform>
    <isoform>
        <id>Q8BIR2-2</id>
        <name>2</name>
        <sequence type="described" ref="VSP_029285 VSP_029286"/>
    </isoform>
</comment>
<comment type="disruption phenotype">
    <text evidence="2">Aste1 deficiency leads to increased genomic instability, impaired DNA repair and defective immunoglobulin class switch recombination.</text>
</comment>
<comment type="similarity">
    <text evidence="4">Belongs to the asteroid family.</text>
</comment>
<comment type="sequence caution" evidence="4">
    <conflict type="erroneous initiation">
        <sequence resource="EMBL-CDS" id="AAH48866"/>
    </conflict>
    <text>Truncated N-terminus.</text>
</comment>
<gene>
    <name type="primary">Aste1</name>
</gene>
<keyword id="KW-0025">Alternative splicing</keyword>
<keyword id="KW-0378">Hydrolase</keyword>
<keyword id="KW-1185">Reference proteome</keyword>
<name>ASTE1_MOUSE</name>
<dbReference type="EC" id="3.1.-.-"/>
<dbReference type="EMBL" id="AK030661">
    <property type="protein sequence ID" value="BAC27067.1"/>
    <property type="molecule type" value="mRNA"/>
</dbReference>
<dbReference type="EMBL" id="BC048866">
    <property type="protein sequence ID" value="AAH48866.1"/>
    <property type="status" value="ALT_INIT"/>
    <property type="molecule type" value="mRNA"/>
</dbReference>
<dbReference type="EMBL" id="BC098471">
    <property type="protein sequence ID" value="AAH98471.1"/>
    <property type="molecule type" value="mRNA"/>
</dbReference>
<dbReference type="CCDS" id="CCDS23465.1">
    <molecule id="Q8BIR2-1"/>
</dbReference>
<dbReference type="CCDS" id="CCDS90653.1">
    <molecule id="Q8BIR2-2"/>
</dbReference>
<dbReference type="RefSeq" id="NP_001344831.1">
    <molecule id="Q8BIR2-2"/>
    <property type="nucleotide sequence ID" value="NM_001357902.1"/>
</dbReference>
<dbReference type="RefSeq" id="NP_079927.2">
    <molecule id="Q8BIR2-1"/>
    <property type="nucleotide sequence ID" value="NM_025651.4"/>
</dbReference>
<dbReference type="RefSeq" id="XP_006511847.1">
    <molecule id="Q8BIR2-1"/>
    <property type="nucleotide sequence ID" value="XM_006511784.5"/>
</dbReference>
<dbReference type="RefSeq" id="XP_006511848.1">
    <property type="nucleotide sequence ID" value="XM_006511785.3"/>
</dbReference>
<dbReference type="RefSeq" id="XP_006511851.1">
    <property type="nucleotide sequence ID" value="XM_006511788.3"/>
</dbReference>
<dbReference type="RefSeq" id="XP_006511852.1">
    <property type="nucleotide sequence ID" value="XM_006511789.3"/>
</dbReference>
<dbReference type="FunCoup" id="Q8BIR2">
    <property type="interactions" value="52"/>
</dbReference>
<dbReference type="STRING" id="10090.ENSMUSP00000035181"/>
<dbReference type="iPTMnet" id="Q8BIR2"/>
<dbReference type="PhosphoSitePlus" id="Q8BIR2"/>
<dbReference type="PaxDb" id="10090-ENSMUSP00000035181"/>
<dbReference type="ProteomicsDB" id="277079">
    <molecule id="Q8BIR2-1"/>
</dbReference>
<dbReference type="ProteomicsDB" id="277080">
    <molecule id="Q8BIR2-2"/>
</dbReference>
<dbReference type="Pumba" id="Q8BIR2"/>
<dbReference type="Antibodypedia" id="33340">
    <property type="antibodies" value="123 antibodies from 18 providers"/>
</dbReference>
<dbReference type="DNASU" id="66595"/>
<dbReference type="Ensembl" id="ENSMUST00000035181.10">
    <molecule id="Q8BIR2-1"/>
    <property type="protein sequence ID" value="ENSMUSP00000035181.4"/>
    <property type="gene ID" value="ENSMUSG00000032567.17"/>
</dbReference>
<dbReference type="Ensembl" id="ENSMUST00000123807.8">
    <molecule id="Q8BIR2-2"/>
    <property type="protein sequence ID" value="ENSMUSP00000149596.2"/>
    <property type="gene ID" value="ENSMUSG00000032567.17"/>
</dbReference>
<dbReference type="GeneID" id="66595"/>
<dbReference type="KEGG" id="mmu:66595"/>
<dbReference type="UCSC" id="uc009ric.2">
    <molecule id="Q8BIR2-1"/>
    <property type="organism name" value="mouse"/>
</dbReference>
<dbReference type="UCSC" id="uc009rid.2">
    <molecule id="Q8BIR2-2"/>
    <property type="organism name" value="mouse"/>
</dbReference>
<dbReference type="AGR" id="MGI:1913845"/>
<dbReference type="CTD" id="28990"/>
<dbReference type="MGI" id="MGI:1913845">
    <property type="gene designation" value="Aste1"/>
</dbReference>
<dbReference type="VEuPathDB" id="HostDB:ENSMUSG00000032567"/>
<dbReference type="eggNOG" id="ENOG502QQRA">
    <property type="taxonomic scope" value="Eukaryota"/>
</dbReference>
<dbReference type="GeneTree" id="ENSGT00390000010145"/>
<dbReference type="HOGENOM" id="CLU_017330_1_0_1"/>
<dbReference type="InParanoid" id="Q8BIR2"/>
<dbReference type="OMA" id="DARCWYE"/>
<dbReference type="OrthoDB" id="25987at2759"/>
<dbReference type="PhylomeDB" id="Q8BIR2"/>
<dbReference type="TreeFam" id="TF324582"/>
<dbReference type="BioGRID-ORCS" id="66595">
    <property type="hits" value="4 hits in 76 CRISPR screens"/>
</dbReference>
<dbReference type="ChiTaRS" id="Aste1">
    <property type="organism name" value="mouse"/>
</dbReference>
<dbReference type="PRO" id="PR:Q8BIR2"/>
<dbReference type="Proteomes" id="UP000000589">
    <property type="component" value="Chromosome 9"/>
</dbReference>
<dbReference type="RNAct" id="Q8BIR2">
    <property type="molecule type" value="protein"/>
</dbReference>
<dbReference type="Bgee" id="ENSMUSG00000032567">
    <property type="expression patterns" value="Expressed in spermatid and 155 other cell types or tissues"/>
</dbReference>
<dbReference type="ExpressionAtlas" id="Q8BIR2">
    <property type="expression patterns" value="baseline and differential"/>
</dbReference>
<dbReference type="GO" id="GO:1990599">
    <property type="term" value="F:3' overhang single-stranded DNA endodeoxyribonuclease activity"/>
    <property type="evidence" value="ECO:0000250"/>
    <property type="project" value="UniProtKB"/>
</dbReference>
<dbReference type="GO" id="GO:0000014">
    <property type="term" value="F:single-stranded DNA endodeoxyribonuclease activity"/>
    <property type="evidence" value="ECO:0000250"/>
    <property type="project" value="UniProtKB"/>
</dbReference>
<dbReference type="GO" id="GO:0000724">
    <property type="term" value="P:double-strand break repair via homologous recombination"/>
    <property type="evidence" value="ECO:0000315"/>
    <property type="project" value="UniProtKB"/>
</dbReference>
<dbReference type="GO" id="GO:0006303">
    <property type="term" value="P:double-strand break repair via nonhomologous end joining"/>
    <property type="evidence" value="ECO:0000315"/>
    <property type="project" value="UniProtKB"/>
</dbReference>
<dbReference type="Gene3D" id="3.40.50.1010">
    <property type="entry name" value="5'-nuclease"/>
    <property type="match status" value="1"/>
</dbReference>
<dbReference type="InterPro" id="IPR026832">
    <property type="entry name" value="Asteroid"/>
</dbReference>
<dbReference type="InterPro" id="IPR029060">
    <property type="entry name" value="PIN-like_dom_sf"/>
</dbReference>
<dbReference type="PANTHER" id="PTHR15665">
    <property type="entry name" value="ASTEROID PROTEIN"/>
    <property type="match status" value="1"/>
</dbReference>
<dbReference type="PANTHER" id="PTHR15665:SF1">
    <property type="entry name" value="PROTEIN ASTEROID HOMOLOG 1"/>
    <property type="match status" value="1"/>
</dbReference>
<dbReference type="SUPFAM" id="SSF88723">
    <property type="entry name" value="PIN domain-like"/>
    <property type="match status" value="1"/>
</dbReference>
<sequence length="672" mass="76370">MGIRGLMSFVEDYSNEFFVDLKLRNTKLIIDGYSLFHRLCFNSDLELRYGGDYDLFADVVQKFFESLFVCHICPYVVLDGGCDISDKKLTTLKDRAKEKIQAARSLSLGGGGNVCPLLIREVFIQVLIRLEVCFVQSFSEADRDIMTLANHWNCPVLSSDSDFCIFDLRSGFCSLNSFQWRNLNTIKDTQDYYIPARSFSLNAFCHYFNNMNKALLPLFAVLCGNDHVNLPIMDTFISKVRLPLSSKGRRYHRVLGLLNWLSHFDDPTEALDNVLKSLPKKSRENVKELLCCSMEEYQQSPVKLQDFFQYGSYVCTDASDLGLPEWVLGALAKGQLPPFISDALVLRRTFLHTQVENMQRPNAHRISQPIRQIIYGLLLNGPSHAEDIAQNTLPSQLLAFNEVERIDTNIKTSTVYAKQLLKDQCDLSKLAELPLARRQMLLLEALKVKQVVLESIPTFLKLPIAVTCYWLQSTEAKAKLHHLQALLLGMLREPLHAIVNSPGTEDPQRGGAKMLYEELCQVKAPMRPGPRVDLDTAHVFCQWQSCLQMGLYLNQLLSTPLPEPNLTWLYNGSLVHRLCQQLPASSSVESLLSLCPEAKQLYEHLFNATKSYAPAELFLPKTKSKSKKKRQKKKVASLGTTADAKHWYDRSNRFGPLMPESLEEHVENSELE</sequence>
<accession>Q8BIR2</accession>
<accession>Q4KMN1</accession>
<accession>Q80VC2</accession>
<organism>
    <name type="scientific">Mus musculus</name>
    <name type="common">Mouse</name>
    <dbReference type="NCBI Taxonomy" id="10090"/>
    <lineage>
        <taxon>Eukaryota</taxon>
        <taxon>Metazoa</taxon>
        <taxon>Chordata</taxon>
        <taxon>Craniata</taxon>
        <taxon>Vertebrata</taxon>
        <taxon>Euteleostomi</taxon>
        <taxon>Mammalia</taxon>
        <taxon>Eutheria</taxon>
        <taxon>Euarchontoglires</taxon>
        <taxon>Glires</taxon>
        <taxon>Rodentia</taxon>
        <taxon>Myomorpha</taxon>
        <taxon>Muroidea</taxon>
        <taxon>Muridae</taxon>
        <taxon>Murinae</taxon>
        <taxon>Mus</taxon>
        <taxon>Mus</taxon>
    </lineage>
</organism>
<protein>
    <recommendedName>
        <fullName>Single-strand DNA endonuclease ASTE1</fullName>
        <ecNumber>3.1.-.-</ecNumber>
    </recommendedName>
    <alternativeName>
        <fullName>Protein asteroid homolog 1</fullName>
    </alternativeName>
</protein>
<proteinExistence type="evidence at transcript level"/>
<reference key="1">
    <citation type="journal article" date="2005" name="Science">
        <title>The transcriptional landscape of the mammalian genome.</title>
        <authorList>
            <person name="Carninci P."/>
            <person name="Kasukawa T."/>
            <person name="Katayama S."/>
            <person name="Gough J."/>
            <person name="Frith M.C."/>
            <person name="Maeda N."/>
            <person name="Oyama R."/>
            <person name="Ravasi T."/>
            <person name="Lenhard B."/>
            <person name="Wells C."/>
            <person name="Kodzius R."/>
            <person name="Shimokawa K."/>
            <person name="Bajic V.B."/>
            <person name="Brenner S.E."/>
            <person name="Batalov S."/>
            <person name="Forrest A.R."/>
            <person name="Zavolan M."/>
            <person name="Davis M.J."/>
            <person name="Wilming L.G."/>
            <person name="Aidinis V."/>
            <person name="Allen J.E."/>
            <person name="Ambesi-Impiombato A."/>
            <person name="Apweiler R."/>
            <person name="Aturaliya R.N."/>
            <person name="Bailey T.L."/>
            <person name="Bansal M."/>
            <person name="Baxter L."/>
            <person name="Beisel K.W."/>
            <person name="Bersano T."/>
            <person name="Bono H."/>
            <person name="Chalk A.M."/>
            <person name="Chiu K.P."/>
            <person name="Choudhary V."/>
            <person name="Christoffels A."/>
            <person name="Clutterbuck D.R."/>
            <person name="Crowe M.L."/>
            <person name="Dalla E."/>
            <person name="Dalrymple B.P."/>
            <person name="de Bono B."/>
            <person name="Della Gatta G."/>
            <person name="di Bernardo D."/>
            <person name="Down T."/>
            <person name="Engstrom P."/>
            <person name="Fagiolini M."/>
            <person name="Faulkner G."/>
            <person name="Fletcher C.F."/>
            <person name="Fukushima T."/>
            <person name="Furuno M."/>
            <person name="Futaki S."/>
            <person name="Gariboldi M."/>
            <person name="Georgii-Hemming P."/>
            <person name="Gingeras T.R."/>
            <person name="Gojobori T."/>
            <person name="Green R.E."/>
            <person name="Gustincich S."/>
            <person name="Harbers M."/>
            <person name="Hayashi Y."/>
            <person name="Hensch T.K."/>
            <person name="Hirokawa N."/>
            <person name="Hill D."/>
            <person name="Huminiecki L."/>
            <person name="Iacono M."/>
            <person name="Ikeo K."/>
            <person name="Iwama A."/>
            <person name="Ishikawa T."/>
            <person name="Jakt M."/>
            <person name="Kanapin A."/>
            <person name="Katoh M."/>
            <person name="Kawasawa Y."/>
            <person name="Kelso J."/>
            <person name="Kitamura H."/>
            <person name="Kitano H."/>
            <person name="Kollias G."/>
            <person name="Krishnan S.P."/>
            <person name="Kruger A."/>
            <person name="Kummerfeld S.K."/>
            <person name="Kurochkin I.V."/>
            <person name="Lareau L.F."/>
            <person name="Lazarevic D."/>
            <person name="Lipovich L."/>
            <person name="Liu J."/>
            <person name="Liuni S."/>
            <person name="McWilliam S."/>
            <person name="Madan Babu M."/>
            <person name="Madera M."/>
            <person name="Marchionni L."/>
            <person name="Matsuda H."/>
            <person name="Matsuzawa S."/>
            <person name="Miki H."/>
            <person name="Mignone F."/>
            <person name="Miyake S."/>
            <person name="Morris K."/>
            <person name="Mottagui-Tabar S."/>
            <person name="Mulder N."/>
            <person name="Nakano N."/>
            <person name="Nakauchi H."/>
            <person name="Ng P."/>
            <person name="Nilsson R."/>
            <person name="Nishiguchi S."/>
            <person name="Nishikawa S."/>
            <person name="Nori F."/>
            <person name="Ohara O."/>
            <person name="Okazaki Y."/>
            <person name="Orlando V."/>
            <person name="Pang K.C."/>
            <person name="Pavan W.J."/>
            <person name="Pavesi G."/>
            <person name="Pesole G."/>
            <person name="Petrovsky N."/>
            <person name="Piazza S."/>
            <person name="Reed J."/>
            <person name="Reid J.F."/>
            <person name="Ring B.Z."/>
            <person name="Ringwald M."/>
            <person name="Rost B."/>
            <person name="Ruan Y."/>
            <person name="Salzberg S.L."/>
            <person name="Sandelin A."/>
            <person name="Schneider C."/>
            <person name="Schoenbach C."/>
            <person name="Sekiguchi K."/>
            <person name="Semple C.A."/>
            <person name="Seno S."/>
            <person name="Sessa L."/>
            <person name="Sheng Y."/>
            <person name="Shibata Y."/>
            <person name="Shimada H."/>
            <person name="Shimada K."/>
            <person name="Silva D."/>
            <person name="Sinclair B."/>
            <person name="Sperling S."/>
            <person name="Stupka E."/>
            <person name="Sugiura K."/>
            <person name="Sultana R."/>
            <person name="Takenaka Y."/>
            <person name="Taki K."/>
            <person name="Tammoja K."/>
            <person name="Tan S.L."/>
            <person name="Tang S."/>
            <person name="Taylor M.S."/>
            <person name="Tegner J."/>
            <person name="Teichmann S.A."/>
            <person name="Ueda H.R."/>
            <person name="van Nimwegen E."/>
            <person name="Verardo R."/>
            <person name="Wei C.L."/>
            <person name="Yagi K."/>
            <person name="Yamanishi H."/>
            <person name="Zabarovsky E."/>
            <person name="Zhu S."/>
            <person name="Zimmer A."/>
            <person name="Hide W."/>
            <person name="Bult C."/>
            <person name="Grimmond S.M."/>
            <person name="Teasdale R.D."/>
            <person name="Liu E.T."/>
            <person name="Brusic V."/>
            <person name="Quackenbush J."/>
            <person name="Wahlestedt C."/>
            <person name="Mattick J.S."/>
            <person name="Hume D.A."/>
            <person name="Kai C."/>
            <person name="Sasaki D."/>
            <person name="Tomaru Y."/>
            <person name="Fukuda S."/>
            <person name="Kanamori-Katayama M."/>
            <person name="Suzuki M."/>
            <person name="Aoki J."/>
            <person name="Arakawa T."/>
            <person name="Iida J."/>
            <person name="Imamura K."/>
            <person name="Itoh M."/>
            <person name="Kato T."/>
            <person name="Kawaji H."/>
            <person name="Kawagashira N."/>
            <person name="Kawashima T."/>
            <person name="Kojima M."/>
            <person name="Kondo S."/>
            <person name="Konno H."/>
            <person name="Nakano K."/>
            <person name="Ninomiya N."/>
            <person name="Nishio T."/>
            <person name="Okada M."/>
            <person name="Plessy C."/>
            <person name="Shibata K."/>
            <person name="Shiraki T."/>
            <person name="Suzuki S."/>
            <person name="Tagami M."/>
            <person name="Waki K."/>
            <person name="Watahiki A."/>
            <person name="Okamura-Oho Y."/>
            <person name="Suzuki H."/>
            <person name="Kawai J."/>
            <person name="Hayashizaki Y."/>
        </authorList>
    </citation>
    <scope>NUCLEOTIDE SEQUENCE [LARGE SCALE MRNA] (ISOFORM 1)</scope>
    <source>
        <strain>C57BL/6J</strain>
        <tissue>Head</tissue>
    </source>
</reference>
<reference key="2">
    <citation type="journal article" date="2004" name="Genome Res.">
        <title>The status, quality, and expansion of the NIH full-length cDNA project: the Mammalian Gene Collection (MGC).</title>
        <authorList>
            <consortium name="The MGC Project Team"/>
        </authorList>
    </citation>
    <scope>NUCLEOTIDE SEQUENCE [LARGE SCALE MRNA] (ISOFORM 2)</scope>
    <source>
        <strain>C57BL/6NCr</strain>
        <strain>NMRI</strain>
        <tissue>Hematopoietic stem cell</tissue>
        <tissue>Mammary tumor</tissue>
    </source>
</reference>
<reference key="3">
    <citation type="journal article" date="2021" name="Nat. Cell Biol.">
        <title>ASTE1 promotes shieldin-complex-mediated DNA repair by attenuating end resection.</title>
        <authorList>
            <person name="Zhao F."/>
            <person name="Kim W."/>
            <person name="Gao H."/>
            <person name="Liu C."/>
            <person name="Zhang Y."/>
            <person name="Chen Y."/>
            <person name="Deng M."/>
            <person name="Zhou Q."/>
            <person name="Huang J."/>
            <person name="Hu Q."/>
            <person name="Chen S.H."/>
            <person name="Nowsheen S."/>
            <person name="Kloeber J.A."/>
            <person name="Qin B."/>
            <person name="Yin P."/>
            <person name="Tu X."/>
            <person name="Guo G."/>
            <person name="Qin S."/>
            <person name="Zhang C."/>
            <person name="Gao M."/>
            <person name="Luo K."/>
            <person name="Liu Y."/>
            <person name="Lou Z."/>
            <person name="Yuan J."/>
        </authorList>
    </citation>
    <scope>FUNCTION</scope>
    <scope>DISRUPTION PHENOTYPE</scope>
</reference>
<feature type="chain" id="PRO_0000310459" description="Single-strand DNA endonuclease ASTE1">
    <location>
        <begin position="1"/>
        <end position="672"/>
    </location>
</feature>
<feature type="region of interest" description="Interaction with SHLD2" evidence="1">
    <location>
        <begin position="349"/>
        <end position="398"/>
    </location>
</feature>
<feature type="splice variant" id="VSP_029285" description="In isoform 2." evidence="3">
    <location>
        <begin position="1"/>
        <end position="61"/>
    </location>
</feature>
<feature type="splice variant" id="VSP_029286" description="In isoform 2." evidence="3">
    <original>KFFESLFVCHICPYVVL</original>
    <variation>MAILSSTDFASILTWSS</variation>
    <location>
        <begin position="62"/>
        <end position="78"/>
    </location>
</feature>
<feature type="sequence conflict" description="In Ref. 2; AAH98471." evidence="4" ref="2">
    <original>T</original>
    <variation>A</variation>
    <location>
        <position position="90"/>
    </location>
</feature>
<feature type="sequence conflict" description="In Ref. 2; AAH98471." evidence="4" ref="2">
    <original>F</original>
    <variation>Y</variation>
    <location>
        <position position="178"/>
    </location>
</feature>
<feature type="sequence conflict" description="In Ref. 2; AAH98471." evidence="4" ref="2">
    <original>E</original>
    <variation>G</variation>
    <location>
        <position position="603"/>
    </location>
</feature>